<evidence type="ECO:0000250" key="1">
    <source>
        <dbReference type="UniProtKB" id="Q9VLJ0"/>
    </source>
</evidence>
<evidence type="ECO:0000255" key="2"/>
<evidence type="ECO:0000312" key="3">
    <source>
        <dbReference type="EMBL" id="EDW37375.1"/>
    </source>
</evidence>
<protein>
    <recommendedName>
        <fullName>Probable cGMP 3',5'-cyclic phosphodiesterase subunit delta</fullName>
    </recommendedName>
</protein>
<accession>B4GJ61</accession>
<sequence length="151" mass="17320">MGSDDQSAADKIQKGFQINYMILRDADSGKIIWQENKDFSAPDVEHEARVPVKILDMRAVSREINFSTVESMENFRLDQKVLFKGRIMEEWFFEMGFVGASTTNTWQSTIEAAPESQMMPAKVLNGNVTIQTSFYDNETLITKSVVRLYYI</sequence>
<organism>
    <name type="scientific">Drosophila persimilis</name>
    <name type="common">Fruit fly</name>
    <dbReference type="NCBI Taxonomy" id="7234"/>
    <lineage>
        <taxon>Eukaryota</taxon>
        <taxon>Metazoa</taxon>
        <taxon>Ecdysozoa</taxon>
        <taxon>Arthropoda</taxon>
        <taxon>Hexapoda</taxon>
        <taxon>Insecta</taxon>
        <taxon>Pterygota</taxon>
        <taxon>Neoptera</taxon>
        <taxon>Endopterygota</taxon>
        <taxon>Diptera</taxon>
        <taxon>Brachycera</taxon>
        <taxon>Muscomorpha</taxon>
        <taxon>Ephydroidea</taxon>
        <taxon>Drosophilidae</taxon>
        <taxon>Drosophila</taxon>
        <taxon>Sophophora</taxon>
    </lineage>
</organism>
<name>PDE6D_DROPE</name>
<comment type="subunit">
    <text evidence="1">Interacts with Pde6.</text>
</comment>
<comment type="subcellular location">
    <subcellularLocation>
        <location evidence="1">Nucleus</location>
    </subcellularLocation>
    <subcellularLocation>
        <location evidence="1">Cytoplasm</location>
    </subcellularLocation>
</comment>
<comment type="similarity">
    <text evidence="2">Belongs to the PDE6D/unc-119 family.</text>
</comment>
<feature type="chain" id="PRO_0000363677" description="Probable cGMP 3',5'-cyclic phosphodiesterase subunit delta">
    <location>
        <begin position="1"/>
        <end position="151"/>
    </location>
</feature>
<reference evidence="3" key="1">
    <citation type="journal article" date="2007" name="Nature">
        <title>Evolution of genes and genomes on the Drosophila phylogeny.</title>
        <authorList>
            <consortium name="Drosophila 12 genomes consortium"/>
        </authorList>
    </citation>
    <scope>NUCLEOTIDE SEQUENCE [LARGE SCALE GENOMIC DNA]</scope>
    <source>
        <strain>MSH-3 / Tucson 14011-0111.49</strain>
    </source>
</reference>
<proteinExistence type="inferred from homology"/>
<gene>
    <name evidence="1" type="primary">PrBP</name>
    <name type="ORF">GL26220</name>
</gene>
<keyword id="KW-0140">cGMP</keyword>
<keyword id="KW-0963">Cytoplasm</keyword>
<keyword id="KW-0539">Nucleus</keyword>
<keyword id="KW-1185">Reference proteome</keyword>
<dbReference type="EMBL" id="CH479184">
    <property type="protein sequence ID" value="EDW37375.1"/>
    <property type="molecule type" value="Genomic_DNA"/>
</dbReference>
<dbReference type="SMR" id="B4GJ61"/>
<dbReference type="STRING" id="7234.B4GJ61"/>
<dbReference type="EnsemblMetazoa" id="FBtr0191835">
    <property type="protein sequence ID" value="FBpp0190327"/>
    <property type="gene ID" value="FBgn0163802"/>
</dbReference>
<dbReference type="EnsemblMetazoa" id="XM_002019143.2">
    <property type="protein sequence ID" value="XP_002019179.1"/>
    <property type="gene ID" value="LOC6593882"/>
</dbReference>
<dbReference type="GeneID" id="6593882"/>
<dbReference type="KEGG" id="dpe:6593882"/>
<dbReference type="eggNOG" id="KOG4038">
    <property type="taxonomic scope" value="Eukaryota"/>
</dbReference>
<dbReference type="HOGENOM" id="CLU_119682_0_0_1"/>
<dbReference type="OMA" id="STNTWQN"/>
<dbReference type="OrthoDB" id="10248777at2759"/>
<dbReference type="PhylomeDB" id="B4GJ61"/>
<dbReference type="Proteomes" id="UP000008744">
    <property type="component" value="Unassembled WGS sequence"/>
</dbReference>
<dbReference type="GO" id="GO:0005737">
    <property type="term" value="C:cytoplasm"/>
    <property type="evidence" value="ECO:0000250"/>
    <property type="project" value="UniProtKB"/>
</dbReference>
<dbReference type="GO" id="GO:0005634">
    <property type="term" value="C:nucleus"/>
    <property type="evidence" value="ECO:0000250"/>
    <property type="project" value="UniProtKB"/>
</dbReference>
<dbReference type="GO" id="GO:0050953">
    <property type="term" value="P:sensory perception of light stimulus"/>
    <property type="evidence" value="ECO:0007669"/>
    <property type="project" value="InterPro"/>
</dbReference>
<dbReference type="FunFam" id="2.70.50.40:FF:000002">
    <property type="entry name" value="Retinal rod rhodopsin-sensitive cGMP 3',5'-cyclic phosphodiesterase subunit delta"/>
    <property type="match status" value="1"/>
</dbReference>
<dbReference type="Gene3D" id="2.70.50.40">
    <property type="entry name" value="GMP phosphodiesterase, delta subunit"/>
    <property type="match status" value="1"/>
</dbReference>
<dbReference type="InterPro" id="IPR014756">
    <property type="entry name" value="Ig_E-set"/>
</dbReference>
<dbReference type="InterPro" id="IPR008015">
    <property type="entry name" value="PDED_dom"/>
</dbReference>
<dbReference type="InterPro" id="IPR037036">
    <property type="entry name" value="PDED_dom_sf"/>
</dbReference>
<dbReference type="InterPro" id="IPR017287">
    <property type="entry name" value="Rhodop-sen_GMP-Pdiesterase_dsu"/>
</dbReference>
<dbReference type="PANTHER" id="PTHR12976">
    <property type="entry name" value="RETINAL ROD RHODOPSIN-SENSITIVE CGMP 3',5'-CYCLIC PHOSPHODIESTERASE DELTA-SUBUNIT"/>
    <property type="match status" value="1"/>
</dbReference>
<dbReference type="PANTHER" id="PTHR12976:SF0">
    <property type="entry name" value="RETINAL ROD RHODOPSIN-SENSITIVE CGMP 3',5'-CYCLIC PHOSPHODIESTERASE SUBUNIT DELTA"/>
    <property type="match status" value="1"/>
</dbReference>
<dbReference type="Pfam" id="PF05351">
    <property type="entry name" value="GMP_PDE_delta"/>
    <property type="match status" value="1"/>
</dbReference>
<dbReference type="PIRSF" id="PIRSF037825">
    <property type="entry name" value="GMP-Pdiesterase_delta"/>
    <property type="match status" value="1"/>
</dbReference>
<dbReference type="SUPFAM" id="SSF81296">
    <property type="entry name" value="E set domains"/>
    <property type="match status" value="1"/>
</dbReference>